<proteinExistence type="inferred from homology"/>
<feature type="chain" id="PRO_1000010166" description="Ribosomal RNA small subunit methyltransferase G">
    <location>
        <begin position="1"/>
        <end position="239"/>
    </location>
</feature>
<feature type="region of interest" description="Disordered" evidence="2">
    <location>
        <begin position="218"/>
        <end position="239"/>
    </location>
</feature>
<feature type="binding site" evidence="1">
    <location>
        <position position="79"/>
    </location>
    <ligand>
        <name>S-adenosyl-L-methionine</name>
        <dbReference type="ChEBI" id="CHEBI:59789"/>
    </ligand>
</feature>
<feature type="binding site" evidence="1">
    <location>
        <position position="84"/>
    </location>
    <ligand>
        <name>S-adenosyl-L-methionine</name>
        <dbReference type="ChEBI" id="CHEBI:59789"/>
    </ligand>
</feature>
<feature type="binding site" evidence="1">
    <location>
        <begin position="130"/>
        <end position="131"/>
    </location>
    <ligand>
        <name>S-adenosyl-L-methionine</name>
        <dbReference type="ChEBI" id="CHEBI:59789"/>
    </ligand>
</feature>
<feature type="binding site" evidence="1">
    <location>
        <position position="149"/>
    </location>
    <ligand>
        <name>S-adenosyl-L-methionine</name>
        <dbReference type="ChEBI" id="CHEBI:59789"/>
    </ligand>
</feature>
<sequence>MTNEDFIEALSSAGITLTTQQVRQFERYYELLVATNEHVNLTAITEKKDVYLKHFYDSLTVAMYEQKLKSSESTLIDIGTGAGFPSLPLKIAFPDLKITMVDALKKRVNFLQEVVDTLDLTGVEIVHGRAEDIGQNPKYRENFDYATARAVARTSVLAEYTLPFVKIGGRFLVMKGSAAHQELLDGQKALAMLGGQVNEEFVFTLPNGDQRYIQIVDKKTKTPKKYPRQAGTPSKKPIS</sequence>
<name>RSMG_LEUMM</name>
<gene>
    <name evidence="1" type="primary">rsmG</name>
    <name type="ordered locus">LEUM_0345</name>
</gene>
<protein>
    <recommendedName>
        <fullName evidence="1">Ribosomal RNA small subunit methyltransferase G</fullName>
        <ecNumber evidence="1">2.1.1.-</ecNumber>
    </recommendedName>
    <alternativeName>
        <fullName evidence="1">16S rRNA 7-methylguanosine methyltransferase</fullName>
        <shortName evidence="1">16S rRNA m7G methyltransferase</shortName>
    </alternativeName>
</protein>
<evidence type="ECO:0000255" key="1">
    <source>
        <dbReference type="HAMAP-Rule" id="MF_00074"/>
    </source>
</evidence>
<evidence type="ECO:0000256" key="2">
    <source>
        <dbReference type="SAM" id="MobiDB-lite"/>
    </source>
</evidence>
<reference key="1">
    <citation type="journal article" date="2006" name="Proc. Natl. Acad. Sci. U.S.A.">
        <title>Comparative genomics of the lactic acid bacteria.</title>
        <authorList>
            <person name="Makarova K.S."/>
            <person name="Slesarev A."/>
            <person name="Wolf Y.I."/>
            <person name="Sorokin A."/>
            <person name="Mirkin B."/>
            <person name="Koonin E.V."/>
            <person name="Pavlov A."/>
            <person name="Pavlova N."/>
            <person name="Karamychev V."/>
            <person name="Polouchine N."/>
            <person name="Shakhova V."/>
            <person name="Grigoriev I."/>
            <person name="Lou Y."/>
            <person name="Rohksar D."/>
            <person name="Lucas S."/>
            <person name="Huang K."/>
            <person name="Goodstein D.M."/>
            <person name="Hawkins T."/>
            <person name="Plengvidhya V."/>
            <person name="Welker D."/>
            <person name="Hughes J."/>
            <person name="Goh Y."/>
            <person name="Benson A."/>
            <person name="Baldwin K."/>
            <person name="Lee J.-H."/>
            <person name="Diaz-Muniz I."/>
            <person name="Dosti B."/>
            <person name="Smeianov V."/>
            <person name="Wechter W."/>
            <person name="Barabote R."/>
            <person name="Lorca G."/>
            <person name="Altermann E."/>
            <person name="Barrangou R."/>
            <person name="Ganesan B."/>
            <person name="Xie Y."/>
            <person name="Rawsthorne H."/>
            <person name="Tamir D."/>
            <person name="Parker C."/>
            <person name="Breidt F."/>
            <person name="Broadbent J.R."/>
            <person name="Hutkins R."/>
            <person name="O'Sullivan D."/>
            <person name="Steele J."/>
            <person name="Unlu G."/>
            <person name="Saier M.H. Jr."/>
            <person name="Klaenhammer T."/>
            <person name="Richardson P."/>
            <person name="Kozyavkin S."/>
            <person name="Weimer B.C."/>
            <person name="Mills D.A."/>
        </authorList>
    </citation>
    <scope>NUCLEOTIDE SEQUENCE [LARGE SCALE GENOMIC DNA]</scope>
    <source>
        <strain>ATCC 8293 / DSM 20343 / BCRC 11652 / CCM 1803 / JCM 6124 / NCDO 523 / NBRC 100496 / NCIMB 8023 / NCTC 12954 / NRRL B-1118 / 37Y</strain>
    </source>
</reference>
<dbReference type="EC" id="2.1.1.-" evidence="1"/>
<dbReference type="EMBL" id="CP000414">
    <property type="protein sequence ID" value="ABJ61468.1"/>
    <property type="molecule type" value="Genomic_DNA"/>
</dbReference>
<dbReference type="RefSeq" id="WP_011679216.1">
    <property type="nucleotide sequence ID" value="NC_008531.1"/>
</dbReference>
<dbReference type="SMR" id="Q03ZA4"/>
<dbReference type="EnsemblBacteria" id="ABJ61468">
    <property type="protein sequence ID" value="ABJ61468"/>
    <property type="gene ID" value="LEUM_0345"/>
</dbReference>
<dbReference type="GeneID" id="29576406"/>
<dbReference type="KEGG" id="lme:LEUM_0345"/>
<dbReference type="eggNOG" id="COG0357">
    <property type="taxonomic scope" value="Bacteria"/>
</dbReference>
<dbReference type="HOGENOM" id="CLU_065341_0_0_9"/>
<dbReference type="Proteomes" id="UP000000362">
    <property type="component" value="Chromosome"/>
</dbReference>
<dbReference type="GO" id="GO:0005829">
    <property type="term" value="C:cytosol"/>
    <property type="evidence" value="ECO:0007669"/>
    <property type="project" value="TreeGrafter"/>
</dbReference>
<dbReference type="GO" id="GO:0070043">
    <property type="term" value="F:rRNA (guanine-N7-)-methyltransferase activity"/>
    <property type="evidence" value="ECO:0007669"/>
    <property type="project" value="UniProtKB-UniRule"/>
</dbReference>
<dbReference type="CDD" id="cd02440">
    <property type="entry name" value="AdoMet_MTases"/>
    <property type="match status" value="1"/>
</dbReference>
<dbReference type="FunFam" id="3.40.50.150:FF:000041">
    <property type="entry name" value="Ribosomal RNA small subunit methyltransferase G"/>
    <property type="match status" value="1"/>
</dbReference>
<dbReference type="Gene3D" id="3.40.50.150">
    <property type="entry name" value="Vaccinia Virus protein VP39"/>
    <property type="match status" value="1"/>
</dbReference>
<dbReference type="HAMAP" id="MF_00074">
    <property type="entry name" value="16SrRNA_methyltr_G"/>
    <property type="match status" value="1"/>
</dbReference>
<dbReference type="InterPro" id="IPR003682">
    <property type="entry name" value="rRNA_ssu_MeTfrase_G"/>
</dbReference>
<dbReference type="InterPro" id="IPR029063">
    <property type="entry name" value="SAM-dependent_MTases_sf"/>
</dbReference>
<dbReference type="NCBIfam" id="TIGR00138">
    <property type="entry name" value="rsmG_gidB"/>
    <property type="match status" value="1"/>
</dbReference>
<dbReference type="PANTHER" id="PTHR31760">
    <property type="entry name" value="S-ADENOSYL-L-METHIONINE-DEPENDENT METHYLTRANSFERASES SUPERFAMILY PROTEIN"/>
    <property type="match status" value="1"/>
</dbReference>
<dbReference type="PANTHER" id="PTHR31760:SF0">
    <property type="entry name" value="S-ADENOSYL-L-METHIONINE-DEPENDENT METHYLTRANSFERASES SUPERFAMILY PROTEIN"/>
    <property type="match status" value="1"/>
</dbReference>
<dbReference type="Pfam" id="PF02527">
    <property type="entry name" value="GidB"/>
    <property type="match status" value="1"/>
</dbReference>
<dbReference type="SUPFAM" id="SSF53335">
    <property type="entry name" value="S-adenosyl-L-methionine-dependent methyltransferases"/>
    <property type="match status" value="1"/>
</dbReference>
<keyword id="KW-0963">Cytoplasm</keyword>
<keyword id="KW-0489">Methyltransferase</keyword>
<keyword id="KW-1185">Reference proteome</keyword>
<keyword id="KW-0698">rRNA processing</keyword>
<keyword id="KW-0949">S-adenosyl-L-methionine</keyword>
<keyword id="KW-0808">Transferase</keyword>
<organism>
    <name type="scientific">Leuconostoc mesenteroides subsp. mesenteroides (strain ATCC 8293 / DSM 20343 / BCRC 11652 / CCM 1803 / JCM 6124 / NCDO 523 / NBRC 100496 / NCIMB 8023 / NCTC 12954 / NRRL B-1118 / 37Y)</name>
    <dbReference type="NCBI Taxonomy" id="203120"/>
    <lineage>
        <taxon>Bacteria</taxon>
        <taxon>Bacillati</taxon>
        <taxon>Bacillota</taxon>
        <taxon>Bacilli</taxon>
        <taxon>Lactobacillales</taxon>
        <taxon>Lactobacillaceae</taxon>
        <taxon>Leuconostoc</taxon>
    </lineage>
</organism>
<comment type="function">
    <text evidence="1">Specifically methylates the N7 position of a guanine in 16S rRNA.</text>
</comment>
<comment type="subcellular location">
    <subcellularLocation>
        <location evidence="1">Cytoplasm</location>
    </subcellularLocation>
</comment>
<comment type="similarity">
    <text evidence="1">Belongs to the methyltransferase superfamily. RNA methyltransferase RsmG family.</text>
</comment>
<accession>Q03ZA4</accession>